<comment type="function">
    <text evidence="1">Activates ribosomal RNA transcription. Plays a direct role in upstream activation of rRNA promoters.</text>
</comment>
<comment type="subunit">
    <text evidence="1">Homodimer.</text>
</comment>
<comment type="similarity">
    <text evidence="1">Belongs to the transcriptional regulatory Fis family.</text>
</comment>
<reference key="1">
    <citation type="submission" date="2008-08" db="EMBL/GenBank/DDBJ databases">
        <title>Complete sequence of Vibrio fischeri strain MJ11.</title>
        <authorList>
            <person name="Mandel M.J."/>
            <person name="Stabb E.V."/>
            <person name="Ruby E.G."/>
            <person name="Ferriera S."/>
            <person name="Johnson J."/>
            <person name="Kravitz S."/>
            <person name="Beeson K."/>
            <person name="Sutton G."/>
            <person name="Rogers Y.-H."/>
            <person name="Friedman R."/>
            <person name="Frazier M."/>
            <person name="Venter J.C."/>
        </authorList>
    </citation>
    <scope>NUCLEOTIDE SEQUENCE [LARGE SCALE GENOMIC DNA]</scope>
    <source>
        <strain>MJ11</strain>
    </source>
</reference>
<accession>B5FC67</accession>
<dbReference type="EMBL" id="CP001139">
    <property type="protein sequence ID" value="ACH66427.1"/>
    <property type="molecule type" value="Genomic_DNA"/>
</dbReference>
<dbReference type="RefSeq" id="WP_005421285.1">
    <property type="nucleotide sequence ID" value="NC_011184.1"/>
</dbReference>
<dbReference type="SMR" id="B5FC67"/>
<dbReference type="GeneID" id="56276516"/>
<dbReference type="KEGG" id="vfm:VFMJ11_2509"/>
<dbReference type="HOGENOM" id="CLU_158040_3_0_6"/>
<dbReference type="Proteomes" id="UP000001857">
    <property type="component" value="Chromosome I"/>
</dbReference>
<dbReference type="GO" id="GO:0003700">
    <property type="term" value="F:DNA-binding transcription factor activity"/>
    <property type="evidence" value="ECO:0007669"/>
    <property type="project" value="UniProtKB-UniRule"/>
</dbReference>
<dbReference type="GO" id="GO:0043565">
    <property type="term" value="F:sequence-specific DNA binding"/>
    <property type="evidence" value="ECO:0007669"/>
    <property type="project" value="InterPro"/>
</dbReference>
<dbReference type="FunFam" id="1.10.10.60:FF:000006">
    <property type="entry name" value="DNA-binding protein Fis"/>
    <property type="match status" value="1"/>
</dbReference>
<dbReference type="Gene3D" id="1.10.10.60">
    <property type="entry name" value="Homeodomain-like"/>
    <property type="match status" value="1"/>
</dbReference>
<dbReference type="HAMAP" id="MF_00166">
    <property type="entry name" value="DNA_binding_Fis"/>
    <property type="match status" value="1"/>
</dbReference>
<dbReference type="InterPro" id="IPR005412">
    <property type="entry name" value="Fis_DNA-bd"/>
</dbReference>
<dbReference type="InterPro" id="IPR009057">
    <property type="entry name" value="Homeodomain-like_sf"/>
</dbReference>
<dbReference type="InterPro" id="IPR002197">
    <property type="entry name" value="HTH_Fis"/>
</dbReference>
<dbReference type="InterPro" id="IPR050207">
    <property type="entry name" value="Trans_regulatory_Fis"/>
</dbReference>
<dbReference type="NCBIfam" id="NF001659">
    <property type="entry name" value="PRK00430.1"/>
    <property type="match status" value="1"/>
</dbReference>
<dbReference type="PANTHER" id="PTHR47918">
    <property type="entry name" value="DNA-BINDING PROTEIN FIS"/>
    <property type="match status" value="1"/>
</dbReference>
<dbReference type="PANTHER" id="PTHR47918:SF1">
    <property type="entry name" value="DNA-BINDING PROTEIN FIS"/>
    <property type="match status" value="1"/>
</dbReference>
<dbReference type="Pfam" id="PF02954">
    <property type="entry name" value="HTH_8"/>
    <property type="match status" value="1"/>
</dbReference>
<dbReference type="PIRSF" id="PIRSF002097">
    <property type="entry name" value="DNA-binding_Fis"/>
    <property type="match status" value="1"/>
</dbReference>
<dbReference type="PRINTS" id="PR01591">
    <property type="entry name" value="DNABINDNGFIS"/>
</dbReference>
<dbReference type="PRINTS" id="PR01590">
    <property type="entry name" value="HTHFIS"/>
</dbReference>
<dbReference type="SUPFAM" id="SSF46689">
    <property type="entry name" value="Homeodomain-like"/>
    <property type="match status" value="1"/>
</dbReference>
<sequence length="98" mass="11047">MFDQSMTSEALTVTTVTAQDQITQKPLRDSVKASLKNYLGQLNGQEVNDLYELVLAEVEQPLLDMIMQHTRGNQTKAANMMGINRGTLRKKLKKYGMN</sequence>
<organism>
    <name type="scientific">Aliivibrio fischeri (strain MJ11)</name>
    <name type="common">Vibrio fischeri</name>
    <dbReference type="NCBI Taxonomy" id="388396"/>
    <lineage>
        <taxon>Bacteria</taxon>
        <taxon>Pseudomonadati</taxon>
        <taxon>Pseudomonadota</taxon>
        <taxon>Gammaproteobacteria</taxon>
        <taxon>Vibrionales</taxon>
        <taxon>Vibrionaceae</taxon>
        <taxon>Aliivibrio</taxon>
    </lineage>
</organism>
<gene>
    <name evidence="1" type="primary">fis</name>
    <name type="ordered locus">VFMJ11_2509</name>
</gene>
<name>FIS_ALIFM</name>
<protein>
    <recommendedName>
        <fullName evidence="1">DNA-binding protein Fis</fullName>
    </recommendedName>
</protein>
<keyword id="KW-0010">Activator</keyword>
<keyword id="KW-0238">DNA-binding</keyword>
<keyword id="KW-0804">Transcription</keyword>
<keyword id="KW-0805">Transcription regulation</keyword>
<feature type="chain" id="PRO_1000097467" description="DNA-binding protein Fis">
    <location>
        <begin position="1"/>
        <end position="98"/>
    </location>
</feature>
<feature type="DNA-binding region" description="H-T-H motif" evidence="1">
    <location>
        <begin position="74"/>
        <end position="93"/>
    </location>
</feature>
<evidence type="ECO:0000255" key="1">
    <source>
        <dbReference type="HAMAP-Rule" id="MF_00166"/>
    </source>
</evidence>
<proteinExistence type="inferred from homology"/>